<comment type="function">
    <text evidence="1">Catalyzes the formation of methylglyoxal from dihydroxyacetone phosphate.</text>
</comment>
<comment type="catalytic activity">
    <reaction evidence="1">
        <text>dihydroxyacetone phosphate = methylglyoxal + phosphate</text>
        <dbReference type="Rhea" id="RHEA:17937"/>
        <dbReference type="ChEBI" id="CHEBI:17158"/>
        <dbReference type="ChEBI" id="CHEBI:43474"/>
        <dbReference type="ChEBI" id="CHEBI:57642"/>
        <dbReference type="EC" id="4.2.3.3"/>
    </reaction>
</comment>
<comment type="similarity">
    <text evidence="1">Belongs to the methylglyoxal synthase family.</text>
</comment>
<accession>B1YKL9</accession>
<reference key="1">
    <citation type="submission" date="2008-04" db="EMBL/GenBank/DDBJ databases">
        <title>Complete sequence of chromosome of Exiguobacterium sibiricum 255-15.</title>
        <authorList>
            <consortium name="US DOE Joint Genome Institute"/>
            <person name="Copeland A."/>
            <person name="Lucas S."/>
            <person name="Lapidus A."/>
            <person name="Glavina del Rio T."/>
            <person name="Dalin E."/>
            <person name="Tice H."/>
            <person name="Bruce D."/>
            <person name="Goodwin L."/>
            <person name="Pitluck S."/>
            <person name="Kiss H."/>
            <person name="Chertkov O."/>
            <person name="Monk C."/>
            <person name="Brettin T."/>
            <person name="Detter J.C."/>
            <person name="Han C."/>
            <person name="Kuske C.R."/>
            <person name="Schmutz J."/>
            <person name="Larimer F."/>
            <person name="Land M."/>
            <person name="Hauser L."/>
            <person name="Kyrpides N."/>
            <person name="Mikhailova N."/>
            <person name="Vishnivetskaya T."/>
            <person name="Rodrigues D.F."/>
            <person name="Gilichinsky D."/>
            <person name="Tiedje J."/>
            <person name="Richardson P."/>
        </authorList>
    </citation>
    <scope>NUCLEOTIDE SEQUENCE [LARGE SCALE GENOMIC DNA]</scope>
    <source>
        <strain>DSM 17290 / CCUG 55495 / CIP 109462 / JCM 13490 / 255-15</strain>
    </source>
</reference>
<gene>
    <name evidence="1" type="primary">mgsA</name>
    <name type="ordered locus">Exig_0721</name>
</gene>
<organism>
    <name type="scientific">Exiguobacterium sibiricum (strain DSM 17290 / CCUG 55495 / CIP 109462 / JCM 13490 / 255-15)</name>
    <dbReference type="NCBI Taxonomy" id="262543"/>
    <lineage>
        <taxon>Bacteria</taxon>
        <taxon>Bacillati</taxon>
        <taxon>Bacillota</taxon>
        <taxon>Bacilli</taxon>
        <taxon>Bacillales</taxon>
        <taxon>Bacillales Family XII. Incertae Sedis</taxon>
        <taxon>Exiguobacterium</taxon>
    </lineage>
</organism>
<feature type="chain" id="PRO_1000128996" description="Methylglyoxal synthase">
    <location>
        <begin position="1"/>
        <end position="144"/>
    </location>
</feature>
<feature type="domain" description="MGS-like" evidence="1">
    <location>
        <begin position="1"/>
        <end position="144"/>
    </location>
</feature>
<feature type="active site" description="Proton donor/acceptor" evidence="1">
    <location>
        <position position="60"/>
    </location>
</feature>
<feature type="binding site" evidence="1">
    <location>
        <position position="8"/>
    </location>
    <ligand>
        <name>substrate</name>
    </ligand>
</feature>
<feature type="binding site" evidence="1">
    <location>
        <position position="12"/>
    </location>
    <ligand>
        <name>substrate</name>
    </ligand>
</feature>
<feature type="binding site" evidence="1">
    <location>
        <begin position="34"/>
        <end position="37"/>
    </location>
    <ligand>
        <name>substrate</name>
    </ligand>
</feature>
<feature type="binding site" evidence="1">
    <location>
        <begin position="54"/>
        <end position="55"/>
    </location>
    <ligand>
        <name>substrate</name>
    </ligand>
</feature>
<feature type="binding site" evidence="1">
    <location>
        <position position="87"/>
    </location>
    <ligand>
        <name>substrate</name>
    </ligand>
</feature>
<protein>
    <recommendedName>
        <fullName evidence="1">Methylglyoxal synthase</fullName>
        <shortName evidence="1">MGS</shortName>
        <ecNumber evidence="1">4.2.3.3</ecNumber>
    </recommendedName>
</protein>
<proteinExistence type="inferred from homology"/>
<sequence>MNIALIAHDEKKDEMMMFTRAYEAYFAKNTLYATGTTGQRIMEATALTVHRCKSGPLGGDQEIGAMVARGEIDIVIFLRDPLTAQPHEPDVSALIRLCDVYDLPLATNVGTAEILINGLEQGEFQWREIIRKRHEEEQRKFLTD</sequence>
<dbReference type="EC" id="4.2.3.3" evidence="1"/>
<dbReference type="EMBL" id="CP001022">
    <property type="protein sequence ID" value="ACB60202.1"/>
    <property type="molecule type" value="Genomic_DNA"/>
</dbReference>
<dbReference type="RefSeq" id="WP_012369626.1">
    <property type="nucleotide sequence ID" value="NC_010556.1"/>
</dbReference>
<dbReference type="SMR" id="B1YKL9"/>
<dbReference type="STRING" id="262543.Exig_0721"/>
<dbReference type="KEGG" id="esi:Exig_0721"/>
<dbReference type="eggNOG" id="COG1803">
    <property type="taxonomic scope" value="Bacteria"/>
</dbReference>
<dbReference type="HOGENOM" id="CLU_120420_1_0_9"/>
<dbReference type="OrthoDB" id="9787147at2"/>
<dbReference type="Proteomes" id="UP000001681">
    <property type="component" value="Chromosome"/>
</dbReference>
<dbReference type="GO" id="GO:0005829">
    <property type="term" value="C:cytosol"/>
    <property type="evidence" value="ECO:0007669"/>
    <property type="project" value="TreeGrafter"/>
</dbReference>
<dbReference type="GO" id="GO:0008929">
    <property type="term" value="F:methylglyoxal synthase activity"/>
    <property type="evidence" value="ECO:0007669"/>
    <property type="project" value="UniProtKB-UniRule"/>
</dbReference>
<dbReference type="GO" id="GO:0019242">
    <property type="term" value="P:methylglyoxal biosynthetic process"/>
    <property type="evidence" value="ECO:0007669"/>
    <property type="project" value="UniProtKB-UniRule"/>
</dbReference>
<dbReference type="CDD" id="cd01422">
    <property type="entry name" value="MGS"/>
    <property type="match status" value="1"/>
</dbReference>
<dbReference type="FunFam" id="3.40.50.1380:FF:000006">
    <property type="entry name" value="Methylglyoxal synthase"/>
    <property type="match status" value="1"/>
</dbReference>
<dbReference type="Gene3D" id="3.40.50.1380">
    <property type="entry name" value="Methylglyoxal synthase-like domain"/>
    <property type="match status" value="1"/>
</dbReference>
<dbReference type="HAMAP" id="MF_00549">
    <property type="entry name" value="Methylglyoxal_synth"/>
    <property type="match status" value="1"/>
</dbReference>
<dbReference type="InterPro" id="IPR004363">
    <property type="entry name" value="Methylgl_synth"/>
</dbReference>
<dbReference type="InterPro" id="IPR018148">
    <property type="entry name" value="Methylglyoxal_synth_AS"/>
</dbReference>
<dbReference type="InterPro" id="IPR011607">
    <property type="entry name" value="MGS-like_dom"/>
</dbReference>
<dbReference type="InterPro" id="IPR036914">
    <property type="entry name" value="MGS-like_dom_sf"/>
</dbReference>
<dbReference type="NCBIfam" id="TIGR00160">
    <property type="entry name" value="MGSA"/>
    <property type="match status" value="1"/>
</dbReference>
<dbReference type="NCBIfam" id="NF003559">
    <property type="entry name" value="PRK05234.1"/>
    <property type="match status" value="1"/>
</dbReference>
<dbReference type="PANTHER" id="PTHR30492">
    <property type="entry name" value="METHYLGLYOXAL SYNTHASE"/>
    <property type="match status" value="1"/>
</dbReference>
<dbReference type="PANTHER" id="PTHR30492:SF0">
    <property type="entry name" value="METHYLGLYOXAL SYNTHASE"/>
    <property type="match status" value="1"/>
</dbReference>
<dbReference type="Pfam" id="PF02142">
    <property type="entry name" value="MGS"/>
    <property type="match status" value="1"/>
</dbReference>
<dbReference type="PIRSF" id="PIRSF006614">
    <property type="entry name" value="Methylglyox_syn"/>
    <property type="match status" value="1"/>
</dbReference>
<dbReference type="SMART" id="SM00851">
    <property type="entry name" value="MGS"/>
    <property type="match status" value="1"/>
</dbReference>
<dbReference type="SUPFAM" id="SSF52335">
    <property type="entry name" value="Methylglyoxal synthase-like"/>
    <property type="match status" value="1"/>
</dbReference>
<dbReference type="PROSITE" id="PS01335">
    <property type="entry name" value="METHYLGLYOXAL_SYNTH"/>
    <property type="match status" value="1"/>
</dbReference>
<dbReference type="PROSITE" id="PS51855">
    <property type="entry name" value="MGS"/>
    <property type="match status" value="1"/>
</dbReference>
<name>MGSA_EXIS2</name>
<evidence type="ECO:0000255" key="1">
    <source>
        <dbReference type="HAMAP-Rule" id="MF_00549"/>
    </source>
</evidence>
<keyword id="KW-0456">Lyase</keyword>
<keyword id="KW-1185">Reference proteome</keyword>